<reference key="1">
    <citation type="submission" date="2008-05" db="EMBL/GenBank/DDBJ databases">
        <title>Genome sequence of Clostridium botulinum Ba4 strain 657.</title>
        <authorList>
            <person name="Shrivastava S."/>
            <person name="Brown J.L."/>
            <person name="Bruce D."/>
            <person name="Detter C."/>
            <person name="Munk C."/>
            <person name="Smith L.A."/>
            <person name="Smith T.J."/>
            <person name="Sutton G."/>
            <person name="Brettin T.S."/>
        </authorList>
    </citation>
    <scope>NUCLEOTIDE SEQUENCE [LARGE SCALE GENOMIC DNA]</scope>
    <source>
        <strain>657 / Type Ba4</strain>
    </source>
</reference>
<sequence length="499" mass="55876">MIKRALISVFDKTGILDLAKFLESRDVEIISTGGTYKHLKENGVKVIDIEEVTGFPEMLDGRVKTLNPLIHGGILAIRDNEEHMKVIEEKGIKPIDMVVVNLYPFFNKVEEDLSFDEKVEFIDIGGPTMIRAAAKNFKDVVVLTDTKDYENVINEIKENNQVNIKTKKKLAGKVFNLMSAYDAAISNFLLEEEYPEYLTLSYKKNMDLRYGENPHQTAAYYTSTVGKYPMKNFKKLNGKELSYNNIKDMDIAWKTVCEFKEVACCALKHNTPCGVAIGDTIQEVYTKAYECDPISIFGGIVAFNRKVDKETAENLIKIFLEIVVAPDFDEDALEVLKTKKNLRVIKCEEKSTQDKDMTKVDGGILVQQSDNKLLEDTKVVTEKSPTEKEMNDLIFGMKVVKYVKSNAIVVIKDGMAKGIGGGQVNRIWAAKEALDRAGDGVVLASDAFFPFGDVAEEAAKWGIKAIIQPGGSIRDEESIKVCNEKGISMVFTGVRHFKH</sequence>
<protein>
    <recommendedName>
        <fullName evidence="1">Bifunctional purine biosynthesis protein PurH</fullName>
    </recommendedName>
    <domain>
        <recommendedName>
            <fullName evidence="1">Phosphoribosylaminoimidazolecarboxamide formyltransferase</fullName>
            <ecNumber evidence="1">2.1.2.3</ecNumber>
        </recommendedName>
        <alternativeName>
            <fullName evidence="1">AICAR transformylase</fullName>
        </alternativeName>
    </domain>
    <domain>
        <recommendedName>
            <fullName evidence="1">IMP cyclohydrolase</fullName>
            <ecNumber evidence="1">3.5.4.10</ecNumber>
        </recommendedName>
        <alternativeName>
            <fullName evidence="1">ATIC</fullName>
        </alternativeName>
        <alternativeName>
            <fullName evidence="1">IMP synthase</fullName>
        </alternativeName>
        <alternativeName>
            <fullName evidence="1">Inosinicase</fullName>
        </alternativeName>
    </domain>
</protein>
<evidence type="ECO:0000255" key="1">
    <source>
        <dbReference type="HAMAP-Rule" id="MF_00139"/>
    </source>
</evidence>
<evidence type="ECO:0000255" key="2">
    <source>
        <dbReference type="PROSITE-ProRule" id="PRU01202"/>
    </source>
</evidence>
<dbReference type="EC" id="2.1.2.3" evidence="1"/>
<dbReference type="EC" id="3.5.4.10" evidence="1"/>
<dbReference type="EMBL" id="CP001083">
    <property type="protein sequence ID" value="ACQ52198.1"/>
    <property type="molecule type" value="Genomic_DNA"/>
</dbReference>
<dbReference type="RefSeq" id="WP_003359898.1">
    <property type="nucleotide sequence ID" value="NC_012658.1"/>
</dbReference>
<dbReference type="SMR" id="C3L2U9"/>
<dbReference type="KEGG" id="cbi:CLJ_B3128"/>
<dbReference type="HOGENOM" id="CLU_016316_5_2_9"/>
<dbReference type="UniPathway" id="UPA00074">
    <property type="reaction ID" value="UER00133"/>
</dbReference>
<dbReference type="UniPathway" id="UPA00074">
    <property type="reaction ID" value="UER00135"/>
</dbReference>
<dbReference type="Proteomes" id="UP000002333">
    <property type="component" value="Chromosome"/>
</dbReference>
<dbReference type="GO" id="GO:0005829">
    <property type="term" value="C:cytosol"/>
    <property type="evidence" value="ECO:0007669"/>
    <property type="project" value="TreeGrafter"/>
</dbReference>
<dbReference type="GO" id="GO:0003937">
    <property type="term" value="F:IMP cyclohydrolase activity"/>
    <property type="evidence" value="ECO:0007669"/>
    <property type="project" value="UniProtKB-UniRule"/>
</dbReference>
<dbReference type="GO" id="GO:0004643">
    <property type="term" value="F:phosphoribosylaminoimidazolecarboxamide formyltransferase activity"/>
    <property type="evidence" value="ECO:0007669"/>
    <property type="project" value="UniProtKB-UniRule"/>
</dbReference>
<dbReference type="GO" id="GO:0006189">
    <property type="term" value="P:'de novo' IMP biosynthetic process"/>
    <property type="evidence" value="ECO:0007669"/>
    <property type="project" value="UniProtKB-UniRule"/>
</dbReference>
<dbReference type="CDD" id="cd01421">
    <property type="entry name" value="IMPCH"/>
    <property type="match status" value="1"/>
</dbReference>
<dbReference type="FunFam" id="3.40.140.20:FF:000001">
    <property type="entry name" value="Bifunctional purine biosynthesis protein PurH"/>
    <property type="match status" value="1"/>
</dbReference>
<dbReference type="FunFam" id="3.40.140.20:FF:000002">
    <property type="entry name" value="Bifunctional purine biosynthesis protein PurH"/>
    <property type="match status" value="1"/>
</dbReference>
<dbReference type="FunFam" id="3.40.50.1380:FF:000001">
    <property type="entry name" value="Bifunctional purine biosynthesis protein PurH"/>
    <property type="match status" value="1"/>
</dbReference>
<dbReference type="Gene3D" id="3.40.140.20">
    <property type="match status" value="2"/>
</dbReference>
<dbReference type="Gene3D" id="3.40.50.1380">
    <property type="entry name" value="Methylglyoxal synthase-like domain"/>
    <property type="match status" value="1"/>
</dbReference>
<dbReference type="HAMAP" id="MF_00139">
    <property type="entry name" value="PurH"/>
    <property type="match status" value="1"/>
</dbReference>
<dbReference type="InterPro" id="IPR024051">
    <property type="entry name" value="AICAR_Tfase_dup_dom_sf"/>
</dbReference>
<dbReference type="InterPro" id="IPR016193">
    <property type="entry name" value="Cytidine_deaminase-like"/>
</dbReference>
<dbReference type="InterPro" id="IPR011607">
    <property type="entry name" value="MGS-like_dom"/>
</dbReference>
<dbReference type="InterPro" id="IPR036914">
    <property type="entry name" value="MGS-like_dom_sf"/>
</dbReference>
<dbReference type="InterPro" id="IPR002695">
    <property type="entry name" value="PurH-like"/>
</dbReference>
<dbReference type="NCBIfam" id="NF002049">
    <property type="entry name" value="PRK00881.1"/>
    <property type="match status" value="1"/>
</dbReference>
<dbReference type="NCBIfam" id="TIGR00355">
    <property type="entry name" value="purH"/>
    <property type="match status" value="1"/>
</dbReference>
<dbReference type="PANTHER" id="PTHR11692:SF0">
    <property type="entry name" value="BIFUNCTIONAL PURINE BIOSYNTHESIS PROTEIN ATIC"/>
    <property type="match status" value="1"/>
</dbReference>
<dbReference type="PANTHER" id="PTHR11692">
    <property type="entry name" value="BIFUNCTIONAL PURINE BIOSYNTHESIS PROTEIN PURH"/>
    <property type="match status" value="1"/>
</dbReference>
<dbReference type="Pfam" id="PF01808">
    <property type="entry name" value="AICARFT_IMPCHas"/>
    <property type="match status" value="1"/>
</dbReference>
<dbReference type="Pfam" id="PF02142">
    <property type="entry name" value="MGS"/>
    <property type="match status" value="1"/>
</dbReference>
<dbReference type="PIRSF" id="PIRSF000414">
    <property type="entry name" value="AICARFT_IMPCHas"/>
    <property type="match status" value="1"/>
</dbReference>
<dbReference type="SMART" id="SM00798">
    <property type="entry name" value="AICARFT_IMPCHas"/>
    <property type="match status" value="1"/>
</dbReference>
<dbReference type="SMART" id="SM00851">
    <property type="entry name" value="MGS"/>
    <property type="match status" value="1"/>
</dbReference>
<dbReference type="SUPFAM" id="SSF53927">
    <property type="entry name" value="Cytidine deaminase-like"/>
    <property type="match status" value="1"/>
</dbReference>
<dbReference type="SUPFAM" id="SSF52335">
    <property type="entry name" value="Methylglyoxal synthase-like"/>
    <property type="match status" value="1"/>
</dbReference>
<dbReference type="PROSITE" id="PS51855">
    <property type="entry name" value="MGS"/>
    <property type="match status" value="1"/>
</dbReference>
<feature type="chain" id="PRO_1000203247" description="Bifunctional purine biosynthesis protein PurH">
    <location>
        <begin position="1"/>
        <end position="499"/>
    </location>
</feature>
<feature type="domain" description="MGS-like" evidence="2">
    <location>
        <begin position="1"/>
        <end position="144"/>
    </location>
</feature>
<name>PUR9_CLOB6</name>
<gene>
    <name evidence="1" type="primary">purH</name>
    <name type="ordered locus">CLJ_B3128</name>
</gene>
<comment type="catalytic activity">
    <reaction evidence="1">
        <text>(6R)-10-formyltetrahydrofolate + 5-amino-1-(5-phospho-beta-D-ribosyl)imidazole-4-carboxamide = 5-formamido-1-(5-phospho-D-ribosyl)imidazole-4-carboxamide + (6S)-5,6,7,8-tetrahydrofolate</text>
        <dbReference type="Rhea" id="RHEA:22192"/>
        <dbReference type="ChEBI" id="CHEBI:57453"/>
        <dbReference type="ChEBI" id="CHEBI:58467"/>
        <dbReference type="ChEBI" id="CHEBI:58475"/>
        <dbReference type="ChEBI" id="CHEBI:195366"/>
        <dbReference type="EC" id="2.1.2.3"/>
    </reaction>
</comment>
<comment type="catalytic activity">
    <reaction evidence="1">
        <text>IMP + H2O = 5-formamido-1-(5-phospho-D-ribosyl)imidazole-4-carboxamide</text>
        <dbReference type="Rhea" id="RHEA:18445"/>
        <dbReference type="ChEBI" id="CHEBI:15377"/>
        <dbReference type="ChEBI" id="CHEBI:58053"/>
        <dbReference type="ChEBI" id="CHEBI:58467"/>
        <dbReference type="EC" id="3.5.4.10"/>
    </reaction>
</comment>
<comment type="pathway">
    <text evidence="1">Purine metabolism; IMP biosynthesis via de novo pathway; 5-formamido-1-(5-phospho-D-ribosyl)imidazole-4-carboxamide from 5-amino-1-(5-phospho-D-ribosyl)imidazole-4-carboxamide (10-formyl THF route): step 1/1.</text>
</comment>
<comment type="pathway">
    <text evidence="1">Purine metabolism; IMP biosynthesis via de novo pathway; IMP from 5-formamido-1-(5-phospho-D-ribosyl)imidazole-4-carboxamide: step 1/1.</text>
</comment>
<comment type="domain">
    <text evidence="1">The IMP cyclohydrolase activity resides in the N-terminal region.</text>
</comment>
<comment type="similarity">
    <text evidence="1">Belongs to the PurH family.</text>
</comment>
<keyword id="KW-0378">Hydrolase</keyword>
<keyword id="KW-0511">Multifunctional enzyme</keyword>
<keyword id="KW-0658">Purine biosynthesis</keyword>
<keyword id="KW-0808">Transferase</keyword>
<accession>C3L2U9</accession>
<organism>
    <name type="scientific">Clostridium botulinum (strain 657 / Type Ba4)</name>
    <dbReference type="NCBI Taxonomy" id="515621"/>
    <lineage>
        <taxon>Bacteria</taxon>
        <taxon>Bacillati</taxon>
        <taxon>Bacillota</taxon>
        <taxon>Clostridia</taxon>
        <taxon>Eubacteriales</taxon>
        <taxon>Clostridiaceae</taxon>
        <taxon>Clostridium</taxon>
    </lineage>
</organism>
<proteinExistence type="inferred from homology"/>